<feature type="chain" id="PRO_0000307714" description="Endophilin-B2">
    <location>
        <begin position="1"/>
        <end position="403"/>
    </location>
</feature>
<feature type="domain" description="BAR" evidence="5">
    <location>
        <begin position="24"/>
        <end position="287"/>
    </location>
</feature>
<feature type="domain" description="SH3" evidence="4">
    <location>
        <begin position="343"/>
        <end position="403"/>
    </location>
</feature>
<feature type="region of interest" description="Membrane-binding amphipathic helix" evidence="2">
    <location>
        <begin position="1"/>
        <end position="27"/>
    </location>
</feature>
<feature type="coiled-coil region" evidence="3">
    <location>
        <begin position="210"/>
        <end position="233"/>
    </location>
</feature>
<evidence type="ECO:0000250" key="1">
    <source>
        <dbReference type="UniProtKB" id="Q9NR46"/>
    </source>
</evidence>
<evidence type="ECO:0000250" key="2">
    <source>
        <dbReference type="UniProtKB" id="Q9Y371"/>
    </source>
</evidence>
<evidence type="ECO:0000255" key="3"/>
<evidence type="ECO:0000255" key="4">
    <source>
        <dbReference type="PROSITE-ProRule" id="PRU00192"/>
    </source>
</evidence>
<evidence type="ECO:0000255" key="5">
    <source>
        <dbReference type="PROSITE-ProRule" id="PRU00361"/>
    </source>
</evidence>
<evidence type="ECO:0000312" key="6">
    <source>
        <dbReference type="EMBL" id="CAG32212.1"/>
    </source>
</evidence>
<keyword id="KW-0175">Coiled coil</keyword>
<keyword id="KW-0963">Cytoplasm</keyword>
<keyword id="KW-1185">Reference proteome</keyword>
<keyword id="KW-0728">SH3 domain</keyword>
<name>SHLB2_CHICK</name>
<gene>
    <name evidence="1" type="primary">SH3GLB2</name>
    <name type="ORF">RCJMB04_20c13</name>
</gene>
<comment type="subunit">
    <text evidence="1">Homodimer, and heterodimer with SH3GLB1.</text>
</comment>
<comment type="subcellular location">
    <subcellularLocation>
        <location evidence="1">Cytoplasm</location>
    </subcellularLocation>
</comment>
<comment type="similarity">
    <text evidence="3">Belongs to the endophilin family.</text>
</comment>
<proteinExistence type="evidence at transcript level"/>
<protein>
    <recommendedName>
        <fullName>Endophilin-B2</fullName>
    </recommendedName>
    <alternativeName>
        <fullName>SH3 domain-containing GRB2-like protein B2</fullName>
    </alternativeName>
</protein>
<dbReference type="EMBL" id="AJ720553">
    <property type="protein sequence ID" value="CAG32212.1"/>
    <property type="molecule type" value="mRNA"/>
</dbReference>
<dbReference type="RefSeq" id="NP_001006200.1">
    <property type="nucleotide sequence ID" value="NM_001006200.2"/>
</dbReference>
<dbReference type="SMR" id="Q5ZJ81"/>
<dbReference type="FunCoup" id="Q5ZJ81">
    <property type="interactions" value="1724"/>
</dbReference>
<dbReference type="STRING" id="9031.ENSGALP00000066164"/>
<dbReference type="PaxDb" id="9031-ENSGALP00000007175"/>
<dbReference type="GeneID" id="417197"/>
<dbReference type="KEGG" id="gga:417197"/>
<dbReference type="CTD" id="56904"/>
<dbReference type="VEuPathDB" id="HostDB:geneid_417197"/>
<dbReference type="eggNOG" id="KOG3725">
    <property type="taxonomic scope" value="Eukaryota"/>
</dbReference>
<dbReference type="HOGENOM" id="CLU_043817_1_1_1"/>
<dbReference type="InParanoid" id="Q5ZJ81"/>
<dbReference type="OrthoDB" id="14167at2759"/>
<dbReference type="PhylomeDB" id="Q5ZJ81"/>
<dbReference type="TreeFam" id="TF313281"/>
<dbReference type="PRO" id="PR:Q5ZJ81"/>
<dbReference type="Proteomes" id="UP000000539">
    <property type="component" value="Chromosome 17"/>
</dbReference>
<dbReference type="Bgee" id="ENSGALG00000039541">
    <property type="expression patterns" value="Expressed in cerebellum and 12 other cell types or tissues"/>
</dbReference>
<dbReference type="GO" id="GO:0005737">
    <property type="term" value="C:cytoplasm"/>
    <property type="evidence" value="ECO:0007669"/>
    <property type="project" value="UniProtKB-SubCell"/>
</dbReference>
<dbReference type="GO" id="GO:0016020">
    <property type="term" value="C:membrane"/>
    <property type="evidence" value="ECO:0000318"/>
    <property type="project" value="GO_Central"/>
</dbReference>
<dbReference type="GO" id="GO:0061024">
    <property type="term" value="P:membrane organization"/>
    <property type="evidence" value="ECO:0000318"/>
    <property type="project" value="GO_Central"/>
</dbReference>
<dbReference type="CDD" id="cd07617">
    <property type="entry name" value="BAR_Endophilin_B2"/>
    <property type="match status" value="1"/>
</dbReference>
<dbReference type="FunFam" id="1.20.1270.60:FF:000017">
    <property type="entry name" value="endophilin-B2 isoform X1"/>
    <property type="match status" value="1"/>
</dbReference>
<dbReference type="FunFam" id="2.30.30.40:FF:000028">
    <property type="entry name" value="endophilin-B2 isoform X1"/>
    <property type="match status" value="1"/>
</dbReference>
<dbReference type="Gene3D" id="1.20.1270.60">
    <property type="entry name" value="Arfaptin homology (AH) domain/BAR domain"/>
    <property type="match status" value="1"/>
</dbReference>
<dbReference type="Gene3D" id="2.30.30.40">
    <property type="entry name" value="SH3 Domains"/>
    <property type="match status" value="1"/>
</dbReference>
<dbReference type="InterPro" id="IPR027267">
    <property type="entry name" value="AH/BAR_dom_sf"/>
</dbReference>
<dbReference type="InterPro" id="IPR004148">
    <property type="entry name" value="BAR_dom"/>
</dbReference>
<dbReference type="InterPro" id="IPR050384">
    <property type="entry name" value="Endophilin_SH3RF"/>
</dbReference>
<dbReference type="InterPro" id="IPR036028">
    <property type="entry name" value="SH3-like_dom_sf"/>
</dbReference>
<dbReference type="InterPro" id="IPR001452">
    <property type="entry name" value="SH3_domain"/>
</dbReference>
<dbReference type="PANTHER" id="PTHR14167:SF68">
    <property type="entry name" value="DREBRIN-LIKE PROTEIN-RELATED"/>
    <property type="match status" value="1"/>
</dbReference>
<dbReference type="PANTHER" id="PTHR14167">
    <property type="entry name" value="SH3 DOMAIN-CONTAINING"/>
    <property type="match status" value="1"/>
</dbReference>
<dbReference type="Pfam" id="PF03114">
    <property type="entry name" value="BAR"/>
    <property type="match status" value="1"/>
</dbReference>
<dbReference type="Pfam" id="PF14604">
    <property type="entry name" value="SH3_9"/>
    <property type="match status" value="1"/>
</dbReference>
<dbReference type="SMART" id="SM00721">
    <property type="entry name" value="BAR"/>
    <property type="match status" value="1"/>
</dbReference>
<dbReference type="SMART" id="SM00326">
    <property type="entry name" value="SH3"/>
    <property type="match status" value="1"/>
</dbReference>
<dbReference type="SUPFAM" id="SSF103657">
    <property type="entry name" value="BAR/IMD domain-like"/>
    <property type="match status" value="1"/>
</dbReference>
<dbReference type="SUPFAM" id="SSF50044">
    <property type="entry name" value="SH3-domain"/>
    <property type="match status" value="1"/>
</dbReference>
<dbReference type="PROSITE" id="PS51021">
    <property type="entry name" value="BAR"/>
    <property type="match status" value="1"/>
</dbReference>
<dbReference type="PROSITE" id="PS50002">
    <property type="entry name" value="SH3"/>
    <property type="match status" value="1"/>
</dbReference>
<organism>
    <name type="scientific">Gallus gallus</name>
    <name type="common">Chicken</name>
    <dbReference type="NCBI Taxonomy" id="9031"/>
    <lineage>
        <taxon>Eukaryota</taxon>
        <taxon>Metazoa</taxon>
        <taxon>Chordata</taxon>
        <taxon>Craniata</taxon>
        <taxon>Vertebrata</taxon>
        <taxon>Euteleostomi</taxon>
        <taxon>Archelosauria</taxon>
        <taxon>Archosauria</taxon>
        <taxon>Dinosauria</taxon>
        <taxon>Saurischia</taxon>
        <taxon>Theropoda</taxon>
        <taxon>Coelurosauria</taxon>
        <taxon>Aves</taxon>
        <taxon>Neognathae</taxon>
        <taxon>Galloanserae</taxon>
        <taxon>Galliformes</taxon>
        <taxon>Phasianidae</taxon>
        <taxon>Phasianinae</taxon>
        <taxon>Gallus</taxon>
    </lineage>
</organism>
<reference evidence="6" key="1">
    <citation type="journal article" date="2005" name="Genome Biol.">
        <title>Full-length cDNAs from chicken bursal lymphocytes to facilitate gene function analysis.</title>
        <authorList>
            <person name="Caldwell R.B."/>
            <person name="Kierzek A.M."/>
            <person name="Arakawa H."/>
            <person name="Bezzubov Y."/>
            <person name="Zaim J."/>
            <person name="Fiedler P."/>
            <person name="Kutter S."/>
            <person name="Blagodatski A."/>
            <person name="Kostovska D."/>
            <person name="Koter M."/>
            <person name="Plachy J."/>
            <person name="Carninci P."/>
            <person name="Hayashizaki Y."/>
            <person name="Buerstedde J.-M."/>
        </authorList>
    </citation>
    <scope>NUCLEOTIDE SEQUENCE [LARGE SCALE MRNA]</scope>
    <source>
        <strain evidence="6">CB</strain>
        <tissue evidence="6">Bursa of Fabricius</tissue>
    </source>
</reference>
<accession>Q5ZJ81</accession>
<sequence length="403" mass="44889">MDFNVKKLASDAGVFFSRAMQFTEEKLGQAEKTELDAHFENLLARADSTKNWTEKILRQTEVLLQPNPSARVEEFLYEKLDRKVPSRVTNGELLAQYMTEAANDFGPGTPYGKTLIKVGETQRRLGAAERDFIHSASINFLTPLRNFLEGDWRTISKERRILQNRRLDLDACKARLKKAKAAEAKAAAVPDFQETRPRNYVLSASASALWSDEVEKAEHELRLTQTEFDRQAEVTRLLLEGISSTHVNHLRCLHEFVESQTNYYAQCYQYMLDLQKQLGRFSGTFVGNAESTSPPPAAASPPAVAATTLPAVPTIPVVPTIVGVPNTVAESVLNPNEVKPPASGTRKARVLYDYEAADSTELALLADEMITVYSLPGMDPDWLIGERGNQKGKVPVTYLELLS</sequence>